<keyword id="KW-0133">Cell shape</keyword>
<keyword id="KW-0961">Cell wall biogenesis/degradation</keyword>
<keyword id="KW-0413">Isomerase</keyword>
<keyword id="KW-0573">Peptidoglycan synthesis</keyword>
<keyword id="KW-1185">Reference proteome</keyword>
<organism>
    <name type="scientific">Clostridium acetobutylicum (strain ATCC 824 / DSM 792 / JCM 1419 / IAM 19013 / LMG 5710 / NBRC 13948 / NRRL B-527 / VKM B-1787 / 2291 / W)</name>
    <dbReference type="NCBI Taxonomy" id="272562"/>
    <lineage>
        <taxon>Bacteria</taxon>
        <taxon>Bacillati</taxon>
        <taxon>Bacillota</taxon>
        <taxon>Clostridia</taxon>
        <taxon>Eubacteriales</taxon>
        <taxon>Clostridiaceae</taxon>
        <taxon>Clostridium</taxon>
    </lineage>
</organism>
<sequence>MSVKNNPIGVIDSGVGGISVLKEAVKQLPYENFIYYGDSKNAPYGIKSVDEVRNLTFNVVEKLLKLNIKALVVACNTATSAAIDELREKYKNIPVIGIEPALKPAVELKRRGKIIIMATPMTLSEVKFKNLMEKYEKDSEIVKLPCPGLVELIEDGIVEGEKMQEYLRNKFKDYEKDDIAAFVLGCTHYPFVKKEIASIARDVPIIDGSQGTVMQLKRKLDKYDILNIGSEKGKIKIMNSLKDDKILDLSHRLLDL</sequence>
<protein>
    <recommendedName>
        <fullName evidence="1">Glutamate racemase</fullName>
        <ecNumber evidence="1">5.1.1.3</ecNumber>
    </recommendedName>
</protein>
<gene>
    <name evidence="1" type="primary">murI</name>
    <name type="ordered locus">CA_C3250</name>
</gene>
<name>MURI_CLOAB</name>
<feature type="chain" id="PRO_0000095465" description="Glutamate racemase">
    <location>
        <begin position="1"/>
        <end position="256"/>
    </location>
</feature>
<feature type="active site" description="Proton donor/acceptor" evidence="1">
    <location>
        <position position="75"/>
    </location>
</feature>
<feature type="active site" description="Proton donor/acceptor" evidence="1">
    <location>
        <position position="186"/>
    </location>
</feature>
<feature type="binding site" evidence="1">
    <location>
        <begin position="12"/>
        <end position="13"/>
    </location>
    <ligand>
        <name>substrate</name>
    </ligand>
</feature>
<feature type="binding site" evidence="1">
    <location>
        <begin position="44"/>
        <end position="45"/>
    </location>
    <ligand>
        <name>substrate</name>
    </ligand>
</feature>
<feature type="binding site" evidence="1">
    <location>
        <begin position="76"/>
        <end position="77"/>
    </location>
    <ligand>
        <name>substrate</name>
    </ligand>
</feature>
<feature type="binding site" evidence="1">
    <location>
        <begin position="187"/>
        <end position="188"/>
    </location>
    <ligand>
        <name>substrate</name>
    </ligand>
</feature>
<comment type="function">
    <text evidence="1">Provides the (R)-glutamate required for cell wall biosynthesis.</text>
</comment>
<comment type="catalytic activity">
    <reaction evidence="1">
        <text>L-glutamate = D-glutamate</text>
        <dbReference type="Rhea" id="RHEA:12813"/>
        <dbReference type="ChEBI" id="CHEBI:29985"/>
        <dbReference type="ChEBI" id="CHEBI:29986"/>
        <dbReference type="EC" id="5.1.1.3"/>
    </reaction>
</comment>
<comment type="pathway">
    <text evidence="1">Cell wall biogenesis; peptidoglycan biosynthesis.</text>
</comment>
<comment type="similarity">
    <text evidence="1">Belongs to the aspartate/glutamate racemases family.</text>
</comment>
<reference key="1">
    <citation type="journal article" date="2001" name="J. Bacteriol.">
        <title>Genome sequence and comparative analysis of the solvent-producing bacterium Clostridium acetobutylicum.</title>
        <authorList>
            <person name="Noelling J."/>
            <person name="Breton G."/>
            <person name="Omelchenko M.V."/>
            <person name="Makarova K.S."/>
            <person name="Zeng Q."/>
            <person name="Gibson R."/>
            <person name="Lee H.M."/>
            <person name="Dubois J."/>
            <person name="Qiu D."/>
            <person name="Hitti J."/>
            <person name="Wolf Y.I."/>
            <person name="Tatusov R.L."/>
            <person name="Sabathe F."/>
            <person name="Doucette-Stamm L.A."/>
            <person name="Soucaille P."/>
            <person name="Daly M.J."/>
            <person name="Bennett G.N."/>
            <person name="Koonin E.V."/>
            <person name="Smith D.R."/>
        </authorList>
    </citation>
    <scope>NUCLEOTIDE SEQUENCE [LARGE SCALE GENOMIC DNA]</scope>
    <source>
        <strain>ATCC 824 / DSM 792 / JCM 1419 / IAM 19013 / LMG 5710 / NBRC 13948 / NRRL B-527 / VKM B-1787 / 2291 / W</strain>
    </source>
</reference>
<proteinExistence type="inferred from homology"/>
<dbReference type="EC" id="5.1.1.3" evidence="1"/>
<dbReference type="EMBL" id="AE001437">
    <property type="protein sequence ID" value="AAK81184.1"/>
    <property type="molecule type" value="Genomic_DNA"/>
</dbReference>
<dbReference type="PIR" id="E97299">
    <property type="entry name" value="E97299"/>
</dbReference>
<dbReference type="RefSeq" id="NP_349844.1">
    <property type="nucleotide sequence ID" value="NC_003030.1"/>
</dbReference>
<dbReference type="RefSeq" id="WP_010966524.1">
    <property type="nucleotide sequence ID" value="NC_003030.1"/>
</dbReference>
<dbReference type="SMR" id="Q97E66"/>
<dbReference type="STRING" id="272562.CA_C3250"/>
<dbReference type="GeneID" id="44999747"/>
<dbReference type="KEGG" id="cac:CA_C3250"/>
<dbReference type="PATRIC" id="fig|272562.8.peg.3428"/>
<dbReference type="eggNOG" id="COG0796">
    <property type="taxonomic scope" value="Bacteria"/>
</dbReference>
<dbReference type="HOGENOM" id="CLU_052344_1_0_9"/>
<dbReference type="OrthoDB" id="9801055at2"/>
<dbReference type="UniPathway" id="UPA00219"/>
<dbReference type="Proteomes" id="UP000000814">
    <property type="component" value="Chromosome"/>
</dbReference>
<dbReference type="GO" id="GO:0008881">
    <property type="term" value="F:glutamate racemase activity"/>
    <property type="evidence" value="ECO:0007669"/>
    <property type="project" value="UniProtKB-UniRule"/>
</dbReference>
<dbReference type="GO" id="GO:0071555">
    <property type="term" value="P:cell wall organization"/>
    <property type="evidence" value="ECO:0007669"/>
    <property type="project" value="UniProtKB-KW"/>
</dbReference>
<dbReference type="GO" id="GO:0009252">
    <property type="term" value="P:peptidoglycan biosynthetic process"/>
    <property type="evidence" value="ECO:0007669"/>
    <property type="project" value="UniProtKB-UniRule"/>
</dbReference>
<dbReference type="GO" id="GO:0008360">
    <property type="term" value="P:regulation of cell shape"/>
    <property type="evidence" value="ECO:0007669"/>
    <property type="project" value="UniProtKB-KW"/>
</dbReference>
<dbReference type="FunFam" id="3.40.50.1860:FF:000002">
    <property type="entry name" value="Glutamate racemase"/>
    <property type="match status" value="1"/>
</dbReference>
<dbReference type="Gene3D" id="3.40.50.1860">
    <property type="match status" value="2"/>
</dbReference>
<dbReference type="HAMAP" id="MF_00258">
    <property type="entry name" value="Glu_racemase"/>
    <property type="match status" value="1"/>
</dbReference>
<dbReference type="InterPro" id="IPR015942">
    <property type="entry name" value="Asp/Glu/hydantoin_racemase"/>
</dbReference>
<dbReference type="InterPro" id="IPR001920">
    <property type="entry name" value="Asp/Glu_race"/>
</dbReference>
<dbReference type="InterPro" id="IPR018187">
    <property type="entry name" value="Asp/Glu_racemase_AS_1"/>
</dbReference>
<dbReference type="InterPro" id="IPR004391">
    <property type="entry name" value="Glu_race"/>
</dbReference>
<dbReference type="NCBIfam" id="TIGR00067">
    <property type="entry name" value="glut_race"/>
    <property type="match status" value="1"/>
</dbReference>
<dbReference type="PANTHER" id="PTHR21198">
    <property type="entry name" value="GLUTAMATE RACEMASE"/>
    <property type="match status" value="1"/>
</dbReference>
<dbReference type="PANTHER" id="PTHR21198:SF3">
    <property type="entry name" value="GLUTAMATE RACEMASE"/>
    <property type="match status" value="1"/>
</dbReference>
<dbReference type="Pfam" id="PF01177">
    <property type="entry name" value="Asp_Glu_race"/>
    <property type="match status" value="1"/>
</dbReference>
<dbReference type="SUPFAM" id="SSF53681">
    <property type="entry name" value="Aspartate/glutamate racemase"/>
    <property type="match status" value="2"/>
</dbReference>
<dbReference type="PROSITE" id="PS00923">
    <property type="entry name" value="ASP_GLU_RACEMASE_1"/>
    <property type="match status" value="1"/>
</dbReference>
<accession>Q97E66</accession>
<evidence type="ECO:0000255" key="1">
    <source>
        <dbReference type="HAMAP-Rule" id="MF_00258"/>
    </source>
</evidence>